<name>RS5_METSB</name>
<accession>B8ELE6</accession>
<keyword id="KW-1185">Reference proteome</keyword>
<keyword id="KW-0687">Ribonucleoprotein</keyword>
<keyword id="KW-0689">Ribosomal protein</keyword>
<keyword id="KW-0694">RNA-binding</keyword>
<keyword id="KW-0699">rRNA-binding</keyword>
<reference key="1">
    <citation type="journal article" date="2010" name="J. Bacteriol.">
        <title>Complete genome sequence of the aerobic facultative methanotroph Methylocella silvestris BL2.</title>
        <authorList>
            <person name="Chen Y."/>
            <person name="Crombie A."/>
            <person name="Rahman M.T."/>
            <person name="Dedysh S.N."/>
            <person name="Liesack W."/>
            <person name="Stott M.B."/>
            <person name="Alam M."/>
            <person name="Theisen A.R."/>
            <person name="Murrell J.C."/>
            <person name="Dunfield P.F."/>
        </authorList>
    </citation>
    <scope>NUCLEOTIDE SEQUENCE [LARGE SCALE GENOMIC DNA]</scope>
    <source>
        <strain>DSM 15510 / CIP 108128 / LMG 27833 / NCIMB 13906 / BL2</strain>
    </source>
</reference>
<feature type="chain" id="PRO_1000165455" description="Small ribosomal subunit protein uS5">
    <location>
        <begin position="1"/>
        <end position="189"/>
    </location>
</feature>
<feature type="domain" description="S5 DRBM" evidence="1">
    <location>
        <begin position="20"/>
        <end position="83"/>
    </location>
</feature>
<gene>
    <name evidence="1" type="primary">rpsE</name>
    <name type="ordered locus">Msil_0563</name>
</gene>
<dbReference type="EMBL" id="CP001280">
    <property type="protein sequence ID" value="ACK49535.1"/>
    <property type="molecule type" value="Genomic_DNA"/>
</dbReference>
<dbReference type="RefSeq" id="WP_012589605.1">
    <property type="nucleotide sequence ID" value="NC_011666.1"/>
</dbReference>
<dbReference type="SMR" id="B8ELE6"/>
<dbReference type="STRING" id="395965.Msil_0563"/>
<dbReference type="KEGG" id="msl:Msil_0563"/>
<dbReference type="eggNOG" id="COG0098">
    <property type="taxonomic scope" value="Bacteria"/>
</dbReference>
<dbReference type="HOGENOM" id="CLU_065898_2_2_5"/>
<dbReference type="OrthoDB" id="9809045at2"/>
<dbReference type="Proteomes" id="UP000002257">
    <property type="component" value="Chromosome"/>
</dbReference>
<dbReference type="GO" id="GO:0015935">
    <property type="term" value="C:small ribosomal subunit"/>
    <property type="evidence" value="ECO:0007669"/>
    <property type="project" value="InterPro"/>
</dbReference>
<dbReference type="GO" id="GO:0019843">
    <property type="term" value="F:rRNA binding"/>
    <property type="evidence" value="ECO:0007669"/>
    <property type="project" value="UniProtKB-UniRule"/>
</dbReference>
<dbReference type="GO" id="GO:0003735">
    <property type="term" value="F:structural constituent of ribosome"/>
    <property type="evidence" value="ECO:0007669"/>
    <property type="project" value="InterPro"/>
</dbReference>
<dbReference type="GO" id="GO:0006412">
    <property type="term" value="P:translation"/>
    <property type="evidence" value="ECO:0007669"/>
    <property type="project" value="UniProtKB-UniRule"/>
</dbReference>
<dbReference type="FunFam" id="3.30.160.20:FF:000001">
    <property type="entry name" value="30S ribosomal protein S5"/>
    <property type="match status" value="1"/>
</dbReference>
<dbReference type="FunFam" id="3.30.230.10:FF:000002">
    <property type="entry name" value="30S ribosomal protein S5"/>
    <property type="match status" value="1"/>
</dbReference>
<dbReference type="Gene3D" id="3.30.160.20">
    <property type="match status" value="1"/>
</dbReference>
<dbReference type="Gene3D" id="3.30.230.10">
    <property type="match status" value="1"/>
</dbReference>
<dbReference type="HAMAP" id="MF_01307_B">
    <property type="entry name" value="Ribosomal_uS5_B"/>
    <property type="match status" value="1"/>
</dbReference>
<dbReference type="InterPro" id="IPR020568">
    <property type="entry name" value="Ribosomal_Su5_D2-typ_SF"/>
</dbReference>
<dbReference type="InterPro" id="IPR000851">
    <property type="entry name" value="Ribosomal_uS5"/>
</dbReference>
<dbReference type="InterPro" id="IPR005712">
    <property type="entry name" value="Ribosomal_uS5_bac-type"/>
</dbReference>
<dbReference type="InterPro" id="IPR005324">
    <property type="entry name" value="Ribosomal_uS5_C"/>
</dbReference>
<dbReference type="InterPro" id="IPR013810">
    <property type="entry name" value="Ribosomal_uS5_N"/>
</dbReference>
<dbReference type="InterPro" id="IPR018192">
    <property type="entry name" value="Ribosomal_uS5_N_CS"/>
</dbReference>
<dbReference type="InterPro" id="IPR014721">
    <property type="entry name" value="Ribsml_uS5_D2-typ_fold_subgr"/>
</dbReference>
<dbReference type="NCBIfam" id="TIGR01021">
    <property type="entry name" value="rpsE_bact"/>
    <property type="match status" value="1"/>
</dbReference>
<dbReference type="PANTHER" id="PTHR48277">
    <property type="entry name" value="MITOCHONDRIAL RIBOSOMAL PROTEIN S5"/>
    <property type="match status" value="1"/>
</dbReference>
<dbReference type="PANTHER" id="PTHR48277:SF1">
    <property type="entry name" value="MITOCHONDRIAL RIBOSOMAL PROTEIN S5"/>
    <property type="match status" value="1"/>
</dbReference>
<dbReference type="Pfam" id="PF00333">
    <property type="entry name" value="Ribosomal_S5"/>
    <property type="match status" value="1"/>
</dbReference>
<dbReference type="Pfam" id="PF03719">
    <property type="entry name" value="Ribosomal_S5_C"/>
    <property type="match status" value="1"/>
</dbReference>
<dbReference type="SUPFAM" id="SSF54768">
    <property type="entry name" value="dsRNA-binding domain-like"/>
    <property type="match status" value="1"/>
</dbReference>
<dbReference type="SUPFAM" id="SSF54211">
    <property type="entry name" value="Ribosomal protein S5 domain 2-like"/>
    <property type="match status" value="1"/>
</dbReference>
<dbReference type="PROSITE" id="PS00585">
    <property type="entry name" value="RIBOSOMAL_S5"/>
    <property type="match status" value="1"/>
</dbReference>
<dbReference type="PROSITE" id="PS50881">
    <property type="entry name" value="S5_DSRBD"/>
    <property type="match status" value="1"/>
</dbReference>
<evidence type="ECO:0000255" key="1">
    <source>
        <dbReference type="HAMAP-Rule" id="MF_01307"/>
    </source>
</evidence>
<evidence type="ECO:0000305" key="2"/>
<protein>
    <recommendedName>
        <fullName evidence="1">Small ribosomal subunit protein uS5</fullName>
    </recommendedName>
    <alternativeName>
        <fullName evidence="2">30S ribosomal protein S5</fullName>
    </alternativeName>
</protein>
<proteinExistence type="inferred from homology"/>
<organism>
    <name type="scientific">Methylocella silvestris (strain DSM 15510 / CIP 108128 / LMG 27833 / NCIMB 13906 / BL2)</name>
    <dbReference type="NCBI Taxonomy" id="395965"/>
    <lineage>
        <taxon>Bacteria</taxon>
        <taxon>Pseudomonadati</taxon>
        <taxon>Pseudomonadota</taxon>
        <taxon>Alphaproteobacteria</taxon>
        <taxon>Hyphomicrobiales</taxon>
        <taxon>Beijerinckiaceae</taxon>
        <taxon>Methylocella</taxon>
    </lineage>
</organism>
<sequence length="189" mass="20320">MAREGEGGRGRDREERDSEFMDRLVHINRVAKVVKGGRRFGFAALVVVGDQKGRVGFGHGKAREVPEAIRKATESAKRSLIRVPLREGRTLHHDVNGRHGAGRVVLRAAPAGTGIIAGGPMRAIFETLGMHDVVAKSQGSSNPYNMVRATFDALGRQDSPRAVAARRNLKVSVLQGRRPGGEAEAASEA</sequence>
<comment type="function">
    <text evidence="1">With S4 and S12 plays an important role in translational accuracy.</text>
</comment>
<comment type="function">
    <text evidence="1">Located at the back of the 30S subunit body where it stabilizes the conformation of the head with respect to the body.</text>
</comment>
<comment type="subunit">
    <text evidence="1">Part of the 30S ribosomal subunit. Contacts proteins S4 and S8.</text>
</comment>
<comment type="domain">
    <text>The N-terminal domain interacts with the head of the 30S subunit; the C-terminal domain interacts with the body and contacts protein S4. The interaction surface between S4 and S5 is involved in control of translational fidelity.</text>
</comment>
<comment type="similarity">
    <text evidence="1">Belongs to the universal ribosomal protein uS5 family.</text>
</comment>